<organism>
    <name type="scientific">Rattus norvegicus</name>
    <name type="common">Rat</name>
    <dbReference type="NCBI Taxonomy" id="10116"/>
    <lineage>
        <taxon>Eukaryota</taxon>
        <taxon>Metazoa</taxon>
        <taxon>Chordata</taxon>
        <taxon>Craniata</taxon>
        <taxon>Vertebrata</taxon>
        <taxon>Euteleostomi</taxon>
        <taxon>Mammalia</taxon>
        <taxon>Eutheria</taxon>
        <taxon>Euarchontoglires</taxon>
        <taxon>Glires</taxon>
        <taxon>Rodentia</taxon>
        <taxon>Myomorpha</taxon>
        <taxon>Muroidea</taxon>
        <taxon>Muridae</taxon>
        <taxon>Murinae</taxon>
        <taxon>Rattus</taxon>
    </lineage>
</organism>
<protein>
    <recommendedName>
        <fullName evidence="2">Cytoplasmic tRNA 2-thiolation protein 2</fullName>
    </recommendedName>
</protein>
<evidence type="ECO:0000250" key="1">
    <source>
        <dbReference type="UniProtKB" id="Q2VPK5"/>
    </source>
</evidence>
<evidence type="ECO:0000255" key="2">
    <source>
        <dbReference type="HAMAP-Rule" id="MF_03054"/>
    </source>
</evidence>
<evidence type="ECO:0000256" key="3">
    <source>
        <dbReference type="SAM" id="MobiDB-lite"/>
    </source>
</evidence>
<evidence type="ECO:0000305" key="4"/>
<comment type="function">
    <text evidence="2">Plays a central role in 2-thiolation of mcm(5)S(2)U at tRNA wobble positions of tRNA(Lys), tRNA(Glu) and tRNA(Gln). May act by forming a heterodimer with CTU1/ATPBD3 that ligates sulfur from thiocarboxylated URM1 onto the uridine of tRNAs at wobble position.</text>
</comment>
<comment type="pathway">
    <text evidence="2">tRNA modification; 5-methoxycarbonylmethyl-2-thiouridine-tRNA biosynthesis.</text>
</comment>
<comment type="subunit">
    <text evidence="2">Component of a complex at least composed of URM1, CTU2/NCS2 and CTU1/ATPBD3.</text>
</comment>
<comment type="subcellular location">
    <subcellularLocation>
        <location evidence="2">Cytoplasm</location>
    </subcellularLocation>
</comment>
<comment type="similarity">
    <text evidence="2">Belongs to the CTU2/NCS2 family.</text>
</comment>
<comment type="sequence caution" evidence="4">
    <conflict type="erroneous initiation">
        <sequence resource="EMBL-CDS" id="AAH79393"/>
    </conflict>
</comment>
<comment type="sequence caution" evidence="4">
    <conflict type="erroneous initiation">
        <sequence resource="EMBL-CDS" id="AAH89862"/>
    </conflict>
</comment>
<proteinExistence type="evidence at transcript level"/>
<name>CTU2_RAT</name>
<keyword id="KW-0007">Acetylation</keyword>
<keyword id="KW-0963">Cytoplasm</keyword>
<keyword id="KW-0597">Phosphoprotein</keyword>
<keyword id="KW-1185">Reference proteome</keyword>
<keyword id="KW-0819">tRNA processing</keyword>
<dbReference type="EMBL" id="AABR06099267">
    <property type="status" value="NOT_ANNOTATED_CDS"/>
    <property type="molecule type" value="Genomic_DNA"/>
</dbReference>
<dbReference type="EMBL" id="BC079393">
    <property type="protein sequence ID" value="AAH79393.1"/>
    <property type="status" value="ALT_INIT"/>
    <property type="molecule type" value="mRNA"/>
</dbReference>
<dbReference type="EMBL" id="BC089862">
    <property type="protein sequence ID" value="AAH89862.1"/>
    <property type="status" value="ALT_INIT"/>
    <property type="molecule type" value="mRNA"/>
</dbReference>
<dbReference type="EMBL" id="BC107464">
    <property type="protein sequence ID" value="AAI07465.1"/>
    <property type="molecule type" value="mRNA"/>
</dbReference>
<dbReference type="RefSeq" id="NP_001032171.1">
    <property type="nucleotide sequence ID" value="NM_001037094.1"/>
</dbReference>
<dbReference type="FunCoup" id="Q3B7U4">
    <property type="interactions" value="2968"/>
</dbReference>
<dbReference type="STRING" id="10116.ENSRNOP00000069225"/>
<dbReference type="PhosphoSitePlus" id="Q3B7U4"/>
<dbReference type="PaxDb" id="10116-ENSRNOP00000032394"/>
<dbReference type="GeneID" id="292069"/>
<dbReference type="KEGG" id="rno:292069"/>
<dbReference type="UCSC" id="RGD:1562594">
    <property type="organism name" value="rat"/>
</dbReference>
<dbReference type="AGR" id="RGD:1562594"/>
<dbReference type="CTD" id="348180"/>
<dbReference type="RGD" id="1562594">
    <property type="gene designation" value="Ctu2"/>
</dbReference>
<dbReference type="eggNOG" id="KOG2594">
    <property type="taxonomic scope" value="Eukaryota"/>
</dbReference>
<dbReference type="InParanoid" id="Q3B7U4"/>
<dbReference type="OrthoDB" id="49934at9989"/>
<dbReference type="TreeFam" id="TF313203"/>
<dbReference type="UniPathway" id="UPA00988"/>
<dbReference type="PRO" id="PR:Q3B7U4"/>
<dbReference type="Proteomes" id="UP000002494">
    <property type="component" value="Unplaced"/>
</dbReference>
<dbReference type="GO" id="GO:0005829">
    <property type="term" value="C:cytosol"/>
    <property type="evidence" value="ECO:0000250"/>
    <property type="project" value="UniProtKB"/>
</dbReference>
<dbReference type="GO" id="GO:0032991">
    <property type="term" value="C:protein-containing complex"/>
    <property type="evidence" value="ECO:0000266"/>
    <property type="project" value="RGD"/>
</dbReference>
<dbReference type="GO" id="GO:0016779">
    <property type="term" value="F:nucleotidyltransferase activity"/>
    <property type="evidence" value="ECO:0007669"/>
    <property type="project" value="UniProtKB-UniRule"/>
</dbReference>
<dbReference type="GO" id="GO:0016783">
    <property type="term" value="F:sulfurtransferase activity"/>
    <property type="evidence" value="ECO:0000318"/>
    <property type="project" value="GO_Central"/>
</dbReference>
<dbReference type="GO" id="GO:0000049">
    <property type="term" value="F:tRNA binding"/>
    <property type="evidence" value="ECO:0007669"/>
    <property type="project" value="InterPro"/>
</dbReference>
<dbReference type="GO" id="GO:0032447">
    <property type="term" value="P:protein urmylation"/>
    <property type="evidence" value="ECO:0007669"/>
    <property type="project" value="UniProtKB-UniRule"/>
</dbReference>
<dbReference type="GO" id="GO:0034227">
    <property type="term" value="P:tRNA thio-modification"/>
    <property type="evidence" value="ECO:0000250"/>
    <property type="project" value="UniProtKB"/>
</dbReference>
<dbReference type="GO" id="GO:0002143">
    <property type="term" value="P:tRNA wobble position uridine thiolation"/>
    <property type="evidence" value="ECO:0000318"/>
    <property type="project" value="GO_Central"/>
</dbReference>
<dbReference type="GO" id="GO:0002098">
    <property type="term" value="P:tRNA wobble uridine modification"/>
    <property type="evidence" value="ECO:0000250"/>
    <property type="project" value="UniProtKB"/>
</dbReference>
<dbReference type="Gene3D" id="3.40.50.620">
    <property type="entry name" value="HUPs"/>
    <property type="match status" value="1"/>
</dbReference>
<dbReference type="HAMAP" id="MF_03054">
    <property type="entry name" value="CTU2"/>
    <property type="match status" value="1"/>
</dbReference>
<dbReference type="InterPro" id="IPR019407">
    <property type="entry name" value="CTU2"/>
</dbReference>
<dbReference type="InterPro" id="IPR014729">
    <property type="entry name" value="Rossmann-like_a/b/a_fold"/>
</dbReference>
<dbReference type="PANTHER" id="PTHR20882">
    <property type="entry name" value="CYTOPLASMIC TRNA 2-THIOLATION PROTEIN 2"/>
    <property type="match status" value="1"/>
</dbReference>
<dbReference type="PANTHER" id="PTHR20882:SF14">
    <property type="entry name" value="CYTOPLASMIC TRNA 2-THIOLATION PROTEIN 2"/>
    <property type="match status" value="1"/>
</dbReference>
<dbReference type="Pfam" id="PF10288">
    <property type="entry name" value="CTU2"/>
    <property type="match status" value="1"/>
</dbReference>
<dbReference type="SUPFAM" id="SSF52402">
    <property type="entry name" value="Adenine nucleotide alpha hydrolases-like"/>
    <property type="match status" value="1"/>
</dbReference>
<reference key="1">
    <citation type="journal article" date="2004" name="Nature">
        <title>Genome sequence of the Brown Norway rat yields insights into mammalian evolution.</title>
        <authorList>
            <person name="Gibbs R.A."/>
            <person name="Weinstock G.M."/>
            <person name="Metzker M.L."/>
            <person name="Muzny D.M."/>
            <person name="Sodergren E.J."/>
            <person name="Scherer S."/>
            <person name="Scott G."/>
            <person name="Steffen D."/>
            <person name="Worley K.C."/>
            <person name="Burch P.E."/>
            <person name="Okwuonu G."/>
            <person name="Hines S."/>
            <person name="Lewis L."/>
            <person name="Deramo C."/>
            <person name="Delgado O."/>
            <person name="Dugan-Rocha S."/>
            <person name="Miner G."/>
            <person name="Morgan M."/>
            <person name="Hawes A."/>
            <person name="Gill R."/>
            <person name="Holt R.A."/>
            <person name="Adams M.D."/>
            <person name="Amanatides P.G."/>
            <person name="Baden-Tillson H."/>
            <person name="Barnstead M."/>
            <person name="Chin S."/>
            <person name="Evans C.A."/>
            <person name="Ferriera S."/>
            <person name="Fosler C."/>
            <person name="Glodek A."/>
            <person name="Gu Z."/>
            <person name="Jennings D."/>
            <person name="Kraft C.L."/>
            <person name="Nguyen T."/>
            <person name="Pfannkoch C.M."/>
            <person name="Sitter C."/>
            <person name="Sutton G.G."/>
            <person name="Venter J.C."/>
            <person name="Woodage T."/>
            <person name="Smith D."/>
            <person name="Lee H.-M."/>
            <person name="Gustafson E."/>
            <person name="Cahill P."/>
            <person name="Kana A."/>
            <person name="Doucette-Stamm L."/>
            <person name="Weinstock K."/>
            <person name="Fechtel K."/>
            <person name="Weiss R.B."/>
            <person name="Dunn D.M."/>
            <person name="Green E.D."/>
            <person name="Blakesley R.W."/>
            <person name="Bouffard G.G."/>
            <person name="De Jong P.J."/>
            <person name="Osoegawa K."/>
            <person name="Zhu B."/>
            <person name="Marra M."/>
            <person name="Schein J."/>
            <person name="Bosdet I."/>
            <person name="Fjell C."/>
            <person name="Jones S."/>
            <person name="Krzywinski M."/>
            <person name="Mathewson C."/>
            <person name="Siddiqui A."/>
            <person name="Wye N."/>
            <person name="McPherson J."/>
            <person name="Zhao S."/>
            <person name="Fraser C.M."/>
            <person name="Shetty J."/>
            <person name="Shatsman S."/>
            <person name="Geer K."/>
            <person name="Chen Y."/>
            <person name="Abramzon S."/>
            <person name="Nierman W.C."/>
            <person name="Havlak P.H."/>
            <person name="Chen R."/>
            <person name="Durbin K.J."/>
            <person name="Egan A."/>
            <person name="Ren Y."/>
            <person name="Song X.-Z."/>
            <person name="Li B."/>
            <person name="Liu Y."/>
            <person name="Qin X."/>
            <person name="Cawley S."/>
            <person name="Cooney A.J."/>
            <person name="D'Souza L.M."/>
            <person name="Martin K."/>
            <person name="Wu J.Q."/>
            <person name="Gonzalez-Garay M.L."/>
            <person name="Jackson A.R."/>
            <person name="Kalafus K.J."/>
            <person name="McLeod M.P."/>
            <person name="Milosavljevic A."/>
            <person name="Virk D."/>
            <person name="Volkov A."/>
            <person name="Wheeler D.A."/>
            <person name="Zhang Z."/>
            <person name="Bailey J.A."/>
            <person name="Eichler E.E."/>
            <person name="Tuzun E."/>
            <person name="Birney E."/>
            <person name="Mongin E."/>
            <person name="Ureta-Vidal A."/>
            <person name="Woodwark C."/>
            <person name="Zdobnov E."/>
            <person name="Bork P."/>
            <person name="Suyama M."/>
            <person name="Torrents D."/>
            <person name="Alexandersson M."/>
            <person name="Trask B.J."/>
            <person name="Young J.M."/>
            <person name="Huang H."/>
            <person name="Wang H."/>
            <person name="Xing H."/>
            <person name="Daniels S."/>
            <person name="Gietzen D."/>
            <person name="Schmidt J."/>
            <person name="Stevens K."/>
            <person name="Vitt U."/>
            <person name="Wingrove J."/>
            <person name="Camara F."/>
            <person name="Mar Alba M."/>
            <person name="Abril J.F."/>
            <person name="Guigo R."/>
            <person name="Smit A."/>
            <person name="Dubchak I."/>
            <person name="Rubin E.M."/>
            <person name="Couronne O."/>
            <person name="Poliakov A."/>
            <person name="Huebner N."/>
            <person name="Ganten D."/>
            <person name="Goesele C."/>
            <person name="Hummel O."/>
            <person name="Kreitler T."/>
            <person name="Lee Y.-A."/>
            <person name="Monti J."/>
            <person name="Schulz H."/>
            <person name="Zimdahl H."/>
            <person name="Himmelbauer H."/>
            <person name="Lehrach H."/>
            <person name="Jacob H.J."/>
            <person name="Bromberg S."/>
            <person name="Gullings-Handley J."/>
            <person name="Jensen-Seaman M.I."/>
            <person name="Kwitek A.E."/>
            <person name="Lazar J."/>
            <person name="Pasko D."/>
            <person name="Tonellato P.J."/>
            <person name="Twigger S."/>
            <person name="Ponting C.P."/>
            <person name="Duarte J.M."/>
            <person name="Rice S."/>
            <person name="Goodstadt L."/>
            <person name="Beatson S.A."/>
            <person name="Emes R.D."/>
            <person name="Winter E.E."/>
            <person name="Webber C."/>
            <person name="Brandt P."/>
            <person name="Nyakatura G."/>
            <person name="Adetobi M."/>
            <person name="Chiaromonte F."/>
            <person name="Elnitski L."/>
            <person name="Eswara P."/>
            <person name="Hardison R.C."/>
            <person name="Hou M."/>
            <person name="Kolbe D."/>
            <person name="Makova K."/>
            <person name="Miller W."/>
            <person name="Nekrutenko A."/>
            <person name="Riemer C."/>
            <person name="Schwartz S."/>
            <person name="Taylor J."/>
            <person name="Yang S."/>
            <person name="Zhang Y."/>
            <person name="Lindpaintner K."/>
            <person name="Andrews T.D."/>
            <person name="Caccamo M."/>
            <person name="Clamp M."/>
            <person name="Clarke L."/>
            <person name="Curwen V."/>
            <person name="Durbin R.M."/>
            <person name="Eyras E."/>
            <person name="Searle S.M."/>
            <person name="Cooper G.M."/>
            <person name="Batzoglou S."/>
            <person name="Brudno M."/>
            <person name="Sidow A."/>
            <person name="Stone E.A."/>
            <person name="Payseur B.A."/>
            <person name="Bourque G."/>
            <person name="Lopez-Otin C."/>
            <person name="Puente X.S."/>
            <person name="Chakrabarti K."/>
            <person name="Chatterji S."/>
            <person name="Dewey C."/>
            <person name="Pachter L."/>
            <person name="Bray N."/>
            <person name="Yap V.B."/>
            <person name="Caspi A."/>
            <person name="Tesler G."/>
            <person name="Pevzner P.A."/>
            <person name="Haussler D."/>
            <person name="Roskin K.M."/>
            <person name="Baertsch R."/>
            <person name="Clawson H."/>
            <person name="Furey T.S."/>
            <person name="Hinrichs A.S."/>
            <person name="Karolchik D."/>
            <person name="Kent W.J."/>
            <person name="Rosenbloom K.R."/>
            <person name="Trumbower H."/>
            <person name="Weirauch M."/>
            <person name="Cooper D.N."/>
            <person name="Stenson P.D."/>
            <person name="Ma B."/>
            <person name="Brent M."/>
            <person name="Arumugam M."/>
            <person name="Shteynberg D."/>
            <person name="Copley R.R."/>
            <person name="Taylor M.S."/>
            <person name="Riethman H."/>
            <person name="Mudunuri U."/>
            <person name="Peterson J."/>
            <person name="Guyer M."/>
            <person name="Felsenfeld A."/>
            <person name="Old S."/>
            <person name="Mockrin S."/>
            <person name="Collins F.S."/>
        </authorList>
    </citation>
    <scope>NUCLEOTIDE SEQUENCE [LARGE SCALE GENOMIC DNA]</scope>
    <source>
        <strain>Brown Norway</strain>
    </source>
</reference>
<reference key="2">
    <citation type="journal article" date="2004" name="Genome Res.">
        <title>The status, quality, and expansion of the NIH full-length cDNA project: the Mammalian Gene Collection (MGC).</title>
        <authorList>
            <consortium name="The MGC Project Team"/>
        </authorList>
    </citation>
    <scope>NUCLEOTIDE SEQUENCE [LARGE SCALE MRNA]</scope>
    <source>
        <tissue>Kidney</tissue>
        <tissue>Testis</tissue>
    </source>
</reference>
<sequence>MCQAGEDYAGPAQREPPPVPRPSREQKCVKCAEGLPVVVIRAGDAFCRDCFKAFYVHKFRAMLGKNRVIFPGEKVLLSWSGGPSSSSMVWQVLEGLSQDSAKRLRFVPGVIYVDEGAACGQSLEDRVKTLAEVKRILGNTGFPFHVVALEEVFSLPPSVLRRASQEPAGTEEAYKAAVDSFLQQQHVLGTEACASPAQGQGQLRPSHSQEPSGTVGHPKDAQTEALSRLFKSIKTLTAKEELLQTLRTHLTVHVARSHGYRKVMTGESCTRLAIKLMTNLAMGRGAFLAWDTGFSDERHGDVVLVRPMRDHTLKEVAFYNRLFGVPSVFTPAIDTKAPEKASIHRLMEAFILKLQTLFPSTVSTVYRTSEKLVKAPREGCATGPSGPNCLLCMCALDVDNADSATAFGAQSSSHLSQMLTAEAGTPTRPCCGAGEGQTQSCHRAVGRREDAWACIIEQLCYSCRVNMKDLPSLDPLPPYVLTEAQLRSQRGSVSEEIQEYLIEEEEEEDRAEPCEAMKQEAEDKGIGL</sequence>
<gene>
    <name type="primary">Ctu2</name>
    <name type="synonym">Ncs2</name>
</gene>
<accession>Q3B7U4</accession>
<accession>F1LQR2</accession>
<accession>Q5FVN4</accession>
<accession>Q6AXQ6</accession>
<feature type="initiator methionine" description="Removed" evidence="1">
    <location>
        <position position="1"/>
    </location>
</feature>
<feature type="chain" id="PRO_0000289177" description="Cytoplasmic tRNA 2-thiolation protein 2">
    <location>
        <begin position="2"/>
        <end position="528"/>
    </location>
</feature>
<feature type="region of interest" description="Disordered" evidence="3">
    <location>
        <begin position="1"/>
        <end position="23"/>
    </location>
</feature>
<feature type="region of interest" description="Disordered" evidence="3">
    <location>
        <begin position="196"/>
        <end position="219"/>
    </location>
</feature>
<feature type="region of interest" description="Disordered" evidence="3">
    <location>
        <begin position="504"/>
        <end position="528"/>
    </location>
</feature>
<feature type="compositionally biased region" description="Polar residues" evidence="3">
    <location>
        <begin position="197"/>
        <end position="212"/>
    </location>
</feature>
<feature type="compositionally biased region" description="Basic and acidic residues" evidence="3">
    <location>
        <begin position="511"/>
        <end position="528"/>
    </location>
</feature>
<feature type="modified residue" description="N-acetylcysteine" evidence="1">
    <location>
        <position position="2"/>
    </location>
</feature>
<feature type="modified residue" description="Phosphoserine" evidence="1">
    <location>
        <position position="416"/>
    </location>
</feature>
<feature type="sequence conflict" description="In Ref. 2; AAH79393/AAH89862/AAI07465." evidence="4" ref="2">
    <original>M</original>
    <variation>L</variation>
    <location>
        <position position="282"/>
    </location>
</feature>